<dbReference type="EMBL" id="CP001132">
    <property type="protein sequence ID" value="ACH84638.1"/>
    <property type="molecule type" value="Genomic_DNA"/>
</dbReference>
<dbReference type="RefSeq" id="WP_012537411.1">
    <property type="nucleotide sequence ID" value="NC_011206.1"/>
</dbReference>
<dbReference type="SMR" id="B5EP97"/>
<dbReference type="GeneID" id="65281850"/>
<dbReference type="KEGG" id="afe:Lferr_2443"/>
<dbReference type="eggNOG" id="COG0359">
    <property type="taxonomic scope" value="Bacteria"/>
</dbReference>
<dbReference type="HOGENOM" id="CLU_078938_4_1_6"/>
<dbReference type="GO" id="GO:1990904">
    <property type="term" value="C:ribonucleoprotein complex"/>
    <property type="evidence" value="ECO:0007669"/>
    <property type="project" value="UniProtKB-KW"/>
</dbReference>
<dbReference type="GO" id="GO:0005840">
    <property type="term" value="C:ribosome"/>
    <property type="evidence" value="ECO:0007669"/>
    <property type="project" value="UniProtKB-KW"/>
</dbReference>
<dbReference type="GO" id="GO:0019843">
    <property type="term" value="F:rRNA binding"/>
    <property type="evidence" value="ECO:0007669"/>
    <property type="project" value="UniProtKB-UniRule"/>
</dbReference>
<dbReference type="GO" id="GO:0003735">
    <property type="term" value="F:structural constituent of ribosome"/>
    <property type="evidence" value="ECO:0007669"/>
    <property type="project" value="InterPro"/>
</dbReference>
<dbReference type="GO" id="GO:0006412">
    <property type="term" value="P:translation"/>
    <property type="evidence" value="ECO:0007669"/>
    <property type="project" value="UniProtKB-UniRule"/>
</dbReference>
<dbReference type="Gene3D" id="3.10.430.100">
    <property type="entry name" value="Ribosomal protein L9, C-terminal domain"/>
    <property type="match status" value="1"/>
</dbReference>
<dbReference type="Gene3D" id="3.40.5.10">
    <property type="entry name" value="Ribosomal protein L9, N-terminal domain"/>
    <property type="match status" value="1"/>
</dbReference>
<dbReference type="HAMAP" id="MF_00503">
    <property type="entry name" value="Ribosomal_bL9"/>
    <property type="match status" value="1"/>
</dbReference>
<dbReference type="InterPro" id="IPR000244">
    <property type="entry name" value="Ribosomal_bL9"/>
</dbReference>
<dbReference type="InterPro" id="IPR009027">
    <property type="entry name" value="Ribosomal_bL9/RNase_H1_N"/>
</dbReference>
<dbReference type="InterPro" id="IPR020594">
    <property type="entry name" value="Ribosomal_bL9_bac/chp"/>
</dbReference>
<dbReference type="InterPro" id="IPR020069">
    <property type="entry name" value="Ribosomal_bL9_C"/>
</dbReference>
<dbReference type="InterPro" id="IPR036791">
    <property type="entry name" value="Ribosomal_bL9_C_sf"/>
</dbReference>
<dbReference type="InterPro" id="IPR020070">
    <property type="entry name" value="Ribosomal_bL9_N"/>
</dbReference>
<dbReference type="InterPro" id="IPR036935">
    <property type="entry name" value="Ribosomal_bL9_N_sf"/>
</dbReference>
<dbReference type="NCBIfam" id="TIGR00158">
    <property type="entry name" value="L9"/>
    <property type="match status" value="1"/>
</dbReference>
<dbReference type="PANTHER" id="PTHR21368">
    <property type="entry name" value="50S RIBOSOMAL PROTEIN L9"/>
    <property type="match status" value="1"/>
</dbReference>
<dbReference type="Pfam" id="PF03948">
    <property type="entry name" value="Ribosomal_L9_C"/>
    <property type="match status" value="1"/>
</dbReference>
<dbReference type="Pfam" id="PF01281">
    <property type="entry name" value="Ribosomal_L9_N"/>
    <property type="match status" value="1"/>
</dbReference>
<dbReference type="SUPFAM" id="SSF55658">
    <property type="entry name" value="L9 N-domain-like"/>
    <property type="match status" value="1"/>
</dbReference>
<dbReference type="SUPFAM" id="SSF55653">
    <property type="entry name" value="Ribosomal protein L9 C-domain"/>
    <property type="match status" value="1"/>
</dbReference>
<dbReference type="PROSITE" id="PS00651">
    <property type="entry name" value="RIBOSOMAL_L9"/>
    <property type="match status" value="1"/>
</dbReference>
<reference key="1">
    <citation type="submission" date="2008-08" db="EMBL/GenBank/DDBJ databases">
        <title>Complete sequence of Acidithiobacillus ferrooxidans ATCC 53993.</title>
        <authorList>
            <person name="Lucas S."/>
            <person name="Copeland A."/>
            <person name="Lapidus A."/>
            <person name="Glavina del Rio T."/>
            <person name="Dalin E."/>
            <person name="Tice H."/>
            <person name="Bruce D."/>
            <person name="Goodwin L."/>
            <person name="Pitluck S."/>
            <person name="Sims D."/>
            <person name="Brettin T."/>
            <person name="Detter J.C."/>
            <person name="Han C."/>
            <person name="Kuske C.R."/>
            <person name="Larimer F."/>
            <person name="Land M."/>
            <person name="Hauser L."/>
            <person name="Kyrpides N."/>
            <person name="Lykidis A."/>
            <person name="Borole A.P."/>
        </authorList>
    </citation>
    <scope>NUCLEOTIDE SEQUENCE [LARGE SCALE GENOMIC DNA]</scope>
    <source>
        <strain>ATCC 53993 / BNL-5-31</strain>
    </source>
</reference>
<evidence type="ECO:0000255" key="1">
    <source>
        <dbReference type="HAMAP-Rule" id="MF_00503"/>
    </source>
</evidence>
<evidence type="ECO:0000305" key="2"/>
<comment type="function">
    <text evidence="1">Binds to the 23S rRNA.</text>
</comment>
<comment type="similarity">
    <text evidence="1">Belongs to the bacterial ribosomal protein bL9 family.</text>
</comment>
<keyword id="KW-0687">Ribonucleoprotein</keyword>
<keyword id="KW-0689">Ribosomal protein</keyword>
<keyword id="KW-0694">RNA-binding</keyword>
<keyword id="KW-0699">rRNA-binding</keyword>
<sequence length="148" mass="16001">MKVILLERINKLGRLGDVVEVRPGYGRNFLVPQGKAVVANQRNLEDFAARKAALEQVEAERLLAAQQRAAALADAMVTIALQAGEDGRLFGSVGLHDISAALAALGHEVAHSEIRLAGGPIKRIGEFPVRVHLHPEVELDVMVFVERA</sequence>
<organism>
    <name type="scientific">Acidithiobacillus ferrooxidans (strain ATCC 53993 / BNL-5-31)</name>
    <name type="common">Leptospirillum ferrooxidans (ATCC 53993)</name>
    <dbReference type="NCBI Taxonomy" id="380394"/>
    <lineage>
        <taxon>Bacteria</taxon>
        <taxon>Pseudomonadati</taxon>
        <taxon>Pseudomonadota</taxon>
        <taxon>Acidithiobacillia</taxon>
        <taxon>Acidithiobacillales</taxon>
        <taxon>Acidithiobacillaceae</taxon>
        <taxon>Acidithiobacillus</taxon>
    </lineage>
</organism>
<feature type="chain" id="PRO_1000126856" description="Large ribosomal subunit protein bL9">
    <location>
        <begin position="1"/>
        <end position="148"/>
    </location>
</feature>
<proteinExistence type="inferred from homology"/>
<gene>
    <name evidence="1" type="primary">rplI</name>
    <name type="ordered locus">Lferr_2443</name>
</gene>
<accession>B5EP97</accession>
<protein>
    <recommendedName>
        <fullName evidence="1">Large ribosomal subunit protein bL9</fullName>
    </recommendedName>
    <alternativeName>
        <fullName evidence="2">50S ribosomal protein L9</fullName>
    </alternativeName>
</protein>
<name>RL9_ACIF5</name>